<feature type="chain" id="PRO_0000125522" description="Probable small nuclear ribonucleoprotein-associated protein B">
    <location>
        <begin position="1"/>
        <end position="160"/>
    </location>
</feature>
<feature type="domain" description="Sm" evidence="2">
    <location>
        <begin position="4"/>
        <end position="86"/>
    </location>
</feature>
<feature type="region of interest" description="Disordered" evidence="3">
    <location>
        <begin position="80"/>
        <end position="160"/>
    </location>
</feature>
<feature type="compositionally biased region" description="Gly residues" evidence="3">
    <location>
        <begin position="99"/>
        <end position="113"/>
    </location>
</feature>
<feature type="compositionally biased region" description="Gly residues" evidence="3">
    <location>
        <begin position="128"/>
        <end position="143"/>
    </location>
</feature>
<feature type="compositionally biased region" description="Gly residues" evidence="3">
    <location>
        <begin position="150"/>
        <end position="160"/>
    </location>
</feature>
<name>RSMB_CAEEL</name>
<sequence length="160" mass="16742">MTISKNNKMMAHLNYRMKIILQDGRTFIGFFKAFDKHMNILLAECEEHRQIKPKAGKKTDGEEKRILGLVLVRGEHIVSMTVDGPPPRDDDSVRLAKAGGAGGVGQAKPGGRGMPAMPGMPGMPPGGAPGGLSGAMRGHGGPGMAAMQPGYGGPPGGRPF</sequence>
<accession>P91918</accession>
<reference key="1">
    <citation type="journal article" date="1998" name="Science">
        <title>Genome sequence of the nematode C. elegans: a platform for investigating biology.</title>
        <authorList>
            <consortium name="The C. elegans sequencing consortium"/>
        </authorList>
    </citation>
    <scope>NUCLEOTIDE SEQUENCE [LARGE SCALE GENOMIC DNA]</scope>
    <source>
        <strain>Bristol N2</strain>
    </source>
</reference>
<gene>
    <name type="primary">snr-2</name>
    <name type="ORF">W08E3.1</name>
</gene>
<keyword id="KW-0002">3D-structure</keyword>
<keyword id="KW-0963">Cytoplasm</keyword>
<keyword id="KW-0507">mRNA processing</keyword>
<keyword id="KW-0508">mRNA splicing</keyword>
<keyword id="KW-0539">Nucleus</keyword>
<keyword id="KW-1185">Reference proteome</keyword>
<keyword id="KW-0687">Ribonucleoprotein</keyword>
<keyword id="KW-0694">RNA-binding</keyword>
<keyword id="KW-0747">Spliceosome</keyword>
<proteinExistence type="evidence at protein level"/>
<dbReference type="EMBL" id="Z92773">
    <property type="protein sequence ID" value="CAB07132.1"/>
    <property type="molecule type" value="Genomic_DNA"/>
</dbReference>
<dbReference type="PIR" id="T26289">
    <property type="entry name" value="T26289"/>
</dbReference>
<dbReference type="RefSeq" id="NP_493348.1">
    <property type="nucleotide sequence ID" value="NM_060947.7"/>
</dbReference>
<dbReference type="PDB" id="8RO0">
    <property type="method" value="EM"/>
    <property type="resolution" value="2.90 A"/>
    <property type="chains" value="b/i=1-160"/>
</dbReference>
<dbReference type="PDB" id="8RO1">
    <property type="method" value="EM"/>
    <property type="resolution" value="3.00 A"/>
    <property type="chains" value="b/i=1-160"/>
</dbReference>
<dbReference type="PDBsum" id="8RO0"/>
<dbReference type="PDBsum" id="8RO1"/>
<dbReference type="EMDB" id="EMD-19397"/>
<dbReference type="EMDB" id="EMD-19398"/>
<dbReference type="SMR" id="P91918"/>
<dbReference type="BioGRID" id="38599">
    <property type="interactions" value="19"/>
</dbReference>
<dbReference type="FunCoup" id="P91918">
    <property type="interactions" value="2231"/>
</dbReference>
<dbReference type="IntAct" id="P91918">
    <property type="interactions" value="3"/>
</dbReference>
<dbReference type="STRING" id="6239.W08E3.1.1"/>
<dbReference type="PaxDb" id="6239-W08E3.1"/>
<dbReference type="PeptideAtlas" id="P91918"/>
<dbReference type="EnsemblMetazoa" id="W08E3.1.1">
    <property type="protein sequence ID" value="W08E3.1.1"/>
    <property type="gene ID" value="WBGene00004915"/>
</dbReference>
<dbReference type="GeneID" id="173204"/>
<dbReference type="KEGG" id="cel:CELE_W08E3.1"/>
<dbReference type="UCSC" id="W08E3.1">
    <property type="organism name" value="c. elegans"/>
</dbReference>
<dbReference type="AGR" id="WB:WBGene00004915"/>
<dbReference type="CTD" id="173204"/>
<dbReference type="WormBase" id="W08E3.1">
    <property type="protein sequence ID" value="CE14704"/>
    <property type="gene ID" value="WBGene00004915"/>
    <property type="gene designation" value="snr-2"/>
</dbReference>
<dbReference type="eggNOG" id="KOG3168">
    <property type="taxonomic scope" value="Eukaryota"/>
</dbReference>
<dbReference type="GeneTree" id="ENSGT00940000170258"/>
<dbReference type="HOGENOM" id="CLU_076902_1_1_1"/>
<dbReference type="InParanoid" id="P91918"/>
<dbReference type="OMA" id="NNKMMAH"/>
<dbReference type="OrthoDB" id="2020720at2759"/>
<dbReference type="PhylomeDB" id="P91918"/>
<dbReference type="Reactome" id="R-CEL-111367">
    <property type="pathway name" value="SLBP independent Processing of Histone Pre-mRNAs"/>
</dbReference>
<dbReference type="Reactome" id="R-CEL-191859">
    <property type="pathway name" value="snRNP Assembly"/>
</dbReference>
<dbReference type="Reactome" id="R-CEL-72163">
    <property type="pathway name" value="mRNA Splicing - Major Pathway"/>
</dbReference>
<dbReference type="Reactome" id="R-CEL-72165">
    <property type="pathway name" value="mRNA Splicing - Minor Pathway"/>
</dbReference>
<dbReference type="Reactome" id="R-CEL-73856">
    <property type="pathway name" value="RNA Polymerase II Transcription Termination"/>
</dbReference>
<dbReference type="Reactome" id="R-CEL-77588">
    <property type="pathway name" value="SLBP Dependent Processing of Replication-Dependent Histone Pre-mRNAs"/>
</dbReference>
<dbReference type="PRO" id="PR:P91918"/>
<dbReference type="Proteomes" id="UP000001940">
    <property type="component" value="Chromosome I"/>
</dbReference>
<dbReference type="Bgee" id="WBGene00004915">
    <property type="expression patterns" value="Expressed in embryo and 3 other cell types or tissues"/>
</dbReference>
<dbReference type="GO" id="GO:0071013">
    <property type="term" value="C:catalytic step 2 spliceosome"/>
    <property type="evidence" value="ECO:0000318"/>
    <property type="project" value="GO_Central"/>
</dbReference>
<dbReference type="GO" id="GO:0005737">
    <property type="term" value="C:cytoplasm"/>
    <property type="evidence" value="ECO:0000318"/>
    <property type="project" value="GO_Central"/>
</dbReference>
<dbReference type="GO" id="GO:0005829">
    <property type="term" value="C:cytosol"/>
    <property type="evidence" value="ECO:0007669"/>
    <property type="project" value="UniProtKB-SubCell"/>
</dbReference>
<dbReference type="GO" id="GO:0005685">
    <property type="term" value="C:U1 snRNP"/>
    <property type="evidence" value="ECO:0000318"/>
    <property type="project" value="GO_Central"/>
</dbReference>
<dbReference type="GO" id="GO:0005686">
    <property type="term" value="C:U2 snRNP"/>
    <property type="evidence" value="ECO:0000318"/>
    <property type="project" value="GO_Central"/>
</dbReference>
<dbReference type="GO" id="GO:0071004">
    <property type="term" value="C:U2-type prespliceosome"/>
    <property type="evidence" value="ECO:0000318"/>
    <property type="project" value="GO_Central"/>
</dbReference>
<dbReference type="GO" id="GO:0005687">
    <property type="term" value="C:U4 snRNP"/>
    <property type="evidence" value="ECO:0000318"/>
    <property type="project" value="GO_Central"/>
</dbReference>
<dbReference type="GO" id="GO:0046540">
    <property type="term" value="C:U4/U6 x U5 tri-snRNP complex"/>
    <property type="evidence" value="ECO:0000318"/>
    <property type="project" value="GO_Central"/>
</dbReference>
<dbReference type="GO" id="GO:0005682">
    <property type="term" value="C:U5 snRNP"/>
    <property type="evidence" value="ECO:0000318"/>
    <property type="project" value="GO_Central"/>
</dbReference>
<dbReference type="GO" id="GO:0003723">
    <property type="term" value="F:RNA binding"/>
    <property type="evidence" value="ECO:0007669"/>
    <property type="project" value="UniProtKB-KW"/>
</dbReference>
<dbReference type="GO" id="GO:0070990">
    <property type="term" value="F:snRNP binding"/>
    <property type="evidence" value="ECO:0000318"/>
    <property type="project" value="GO_Central"/>
</dbReference>
<dbReference type="GO" id="GO:0000398">
    <property type="term" value="P:mRNA splicing, via spliceosome"/>
    <property type="evidence" value="ECO:0000318"/>
    <property type="project" value="GO_Central"/>
</dbReference>
<dbReference type="CDD" id="cd01717">
    <property type="entry name" value="Sm_B"/>
    <property type="match status" value="1"/>
</dbReference>
<dbReference type="FunFam" id="2.30.30.100:FF:000004">
    <property type="entry name" value="Small nuclear ribonucleoprotein-associated proteins"/>
    <property type="match status" value="1"/>
</dbReference>
<dbReference type="Gene3D" id="2.30.30.100">
    <property type="match status" value="1"/>
</dbReference>
<dbReference type="InterPro" id="IPR010920">
    <property type="entry name" value="LSM_dom_sf"/>
</dbReference>
<dbReference type="InterPro" id="IPR047575">
    <property type="entry name" value="Sm"/>
</dbReference>
<dbReference type="InterPro" id="IPR001163">
    <property type="entry name" value="Sm_dom_euk/arc"/>
</dbReference>
<dbReference type="InterPro" id="IPR050914">
    <property type="entry name" value="snRNP_SmB/NAA38-like"/>
</dbReference>
<dbReference type="PANTHER" id="PTHR10701:SF0">
    <property type="entry name" value="SMALL NUCLEAR RIBONUCLEOPROTEIN-ASSOCIATED PROTEIN B"/>
    <property type="match status" value="1"/>
</dbReference>
<dbReference type="PANTHER" id="PTHR10701">
    <property type="entry name" value="SMALL NUCLEAR RIBONUCLEOPROTEIN-ASSOCIATED PROTEIN B AND N"/>
    <property type="match status" value="1"/>
</dbReference>
<dbReference type="Pfam" id="PF01423">
    <property type="entry name" value="LSM"/>
    <property type="match status" value="1"/>
</dbReference>
<dbReference type="SMART" id="SM00651">
    <property type="entry name" value="Sm"/>
    <property type="match status" value="1"/>
</dbReference>
<dbReference type="SUPFAM" id="SSF50182">
    <property type="entry name" value="Sm-like ribonucleoproteins"/>
    <property type="match status" value="1"/>
</dbReference>
<dbReference type="PROSITE" id="PS52002">
    <property type="entry name" value="SM"/>
    <property type="match status" value="1"/>
</dbReference>
<organism evidence="5">
    <name type="scientific">Caenorhabditis elegans</name>
    <dbReference type="NCBI Taxonomy" id="6239"/>
    <lineage>
        <taxon>Eukaryota</taxon>
        <taxon>Metazoa</taxon>
        <taxon>Ecdysozoa</taxon>
        <taxon>Nematoda</taxon>
        <taxon>Chromadorea</taxon>
        <taxon>Rhabditida</taxon>
        <taxon>Rhabditina</taxon>
        <taxon>Rhabditomorpha</taxon>
        <taxon>Rhabditoidea</taxon>
        <taxon>Rhabditidae</taxon>
        <taxon>Peloderinae</taxon>
        <taxon>Caenorhabditis</taxon>
    </lineage>
</organism>
<protein>
    <recommendedName>
        <fullName>Probable small nuclear ribonucleoprotein-associated protein B</fullName>
        <shortName>snRNP-B</shortName>
    </recommendedName>
    <alternativeName>
        <fullName>Sm protein B</fullName>
        <shortName>Sm-B</shortName>
        <shortName>SmB</shortName>
    </alternativeName>
</protein>
<comment type="function">
    <text evidence="1">Plays a role in pre-mRNA splicing as a core component of the spliceosomal U1, U2, U4 and U5 small nuclear ribonucleoproteins (snRNPs), the building blocks of the spliceosome.</text>
</comment>
<comment type="subcellular location">
    <subcellularLocation>
        <location evidence="1">Nucleus</location>
    </subcellularLocation>
    <subcellularLocation>
        <location evidence="1">Cytoplasm</location>
        <location evidence="1">Cytosol</location>
    </subcellularLocation>
</comment>
<comment type="similarity">
    <text evidence="4">Belongs to the snRNP SmB/SmN family.</text>
</comment>
<evidence type="ECO:0000250" key="1">
    <source>
        <dbReference type="UniProtKB" id="P14678"/>
    </source>
</evidence>
<evidence type="ECO:0000255" key="2">
    <source>
        <dbReference type="PROSITE-ProRule" id="PRU01346"/>
    </source>
</evidence>
<evidence type="ECO:0000256" key="3">
    <source>
        <dbReference type="SAM" id="MobiDB-lite"/>
    </source>
</evidence>
<evidence type="ECO:0000305" key="4"/>
<evidence type="ECO:0000312" key="5">
    <source>
        <dbReference type="EMBL" id="CAB07132.1"/>
    </source>
</evidence>